<name>STHA_ECOHS</name>
<organism>
    <name type="scientific">Escherichia coli O9:H4 (strain HS)</name>
    <dbReference type="NCBI Taxonomy" id="331112"/>
    <lineage>
        <taxon>Bacteria</taxon>
        <taxon>Pseudomonadati</taxon>
        <taxon>Pseudomonadota</taxon>
        <taxon>Gammaproteobacteria</taxon>
        <taxon>Enterobacterales</taxon>
        <taxon>Enterobacteriaceae</taxon>
        <taxon>Escherichia</taxon>
    </lineage>
</organism>
<feature type="chain" id="PRO_1000059009" description="Soluble pyridine nucleotide transhydrogenase">
    <location>
        <begin position="1"/>
        <end position="466"/>
    </location>
</feature>
<feature type="binding site" evidence="1">
    <location>
        <begin position="36"/>
        <end position="45"/>
    </location>
    <ligand>
        <name>FAD</name>
        <dbReference type="ChEBI" id="CHEBI:57692"/>
    </ligand>
</feature>
<dbReference type="EC" id="1.6.1.1" evidence="1"/>
<dbReference type="EMBL" id="CP000802">
    <property type="protein sequence ID" value="ABV08374.1"/>
    <property type="molecule type" value="Genomic_DNA"/>
</dbReference>
<dbReference type="RefSeq" id="WP_001120800.1">
    <property type="nucleotide sequence ID" value="NC_009800.1"/>
</dbReference>
<dbReference type="SMR" id="A8A770"/>
<dbReference type="KEGG" id="ecx:EcHS_A4196"/>
<dbReference type="HOGENOM" id="CLU_016755_0_0_6"/>
<dbReference type="GO" id="GO:0005829">
    <property type="term" value="C:cytosol"/>
    <property type="evidence" value="ECO:0007669"/>
    <property type="project" value="TreeGrafter"/>
</dbReference>
<dbReference type="GO" id="GO:0004148">
    <property type="term" value="F:dihydrolipoyl dehydrogenase (NADH) activity"/>
    <property type="evidence" value="ECO:0007669"/>
    <property type="project" value="TreeGrafter"/>
</dbReference>
<dbReference type="GO" id="GO:0050660">
    <property type="term" value="F:flavin adenine dinucleotide binding"/>
    <property type="evidence" value="ECO:0007669"/>
    <property type="project" value="TreeGrafter"/>
</dbReference>
<dbReference type="GO" id="GO:0003957">
    <property type="term" value="F:NAD(P)+ transhydrogenase (Si-specific) activity"/>
    <property type="evidence" value="ECO:0007669"/>
    <property type="project" value="UniProtKB-UniRule"/>
</dbReference>
<dbReference type="GO" id="GO:0006103">
    <property type="term" value="P:2-oxoglutarate metabolic process"/>
    <property type="evidence" value="ECO:0007669"/>
    <property type="project" value="TreeGrafter"/>
</dbReference>
<dbReference type="GO" id="GO:0006739">
    <property type="term" value="P:NADP metabolic process"/>
    <property type="evidence" value="ECO:0007669"/>
    <property type="project" value="UniProtKB-UniRule"/>
</dbReference>
<dbReference type="FunFam" id="3.30.390.30:FF:000002">
    <property type="entry name" value="Soluble pyridine nucleotide transhydrogenase"/>
    <property type="match status" value="1"/>
</dbReference>
<dbReference type="FunFam" id="3.50.50.60:FF:000008">
    <property type="entry name" value="Soluble pyridine nucleotide transhydrogenase"/>
    <property type="match status" value="1"/>
</dbReference>
<dbReference type="Gene3D" id="3.30.390.30">
    <property type="match status" value="1"/>
</dbReference>
<dbReference type="Gene3D" id="3.50.50.60">
    <property type="entry name" value="FAD/NAD(P)-binding domain"/>
    <property type="match status" value="2"/>
</dbReference>
<dbReference type="HAMAP" id="MF_00247">
    <property type="entry name" value="SthA"/>
    <property type="match status" value="1"/>
</dbReference>
<dbReference type="InterPro" id="IPR050151">
    <property type="entry name" value="Class-I_Pyr_Nuc-Dis_Oxidored"/>
</dbReference>
<dbReference type="InterPro" id="IPR036188">
    <property type="entry name" value="FAD/NAD-bd_sf"/>
</dbReference>
<dbReference type="InterPro" id="IPR023753">
    <property type="entry name" value="FAD/NAD-binding_dom"/>
</dbReference>
<dbReference type="InterPro" id="IPR016156">
    <property type="entry name" value="FAD/NAD-linked_Rdtase_dimer_sf"/>
</dbReference>
<dbReference type="InterPro" id="IPR001100">
    <property type="entry name" value="Pyr_nuc-diS_OxRdtase"/>
</dbReference>
<dbReference type="InterPro" id="IPR004099">
    <property type="entry name" value="Pyr_nucl-diS_OxRdtase_dimer"/>
</dbReference>
<dbReference type="InterPro" id="IPR022962">
    <property type="entry name" value="STH_gammaproteobact"/>
</dbReference>
<dbReference type="NCBIfam" id="NF003585">
    <property type="entry name" value="PRK05249.1"/>
    <property type="match status" value="1"/>
</dbReference>
<dbReference type="PANTHER" id="PTHR22912">
    <property type="entry name" value="DISULFIDE OXIDOREDUCTASE"/>
    <property type="match status" value="1"/>
</dbReference>
<dbReference type="PANTHER" id="PTHR22912:SF93">
    <property type="entry name" value="SOLUBLE PYRIDINE NUCLEOTIDE TRANSHYDROGENASE"/>
    <property type="match status" value="1"/>
</dbReference>
<dbReference type="Pfam" id="PF07992">
    <property type="entry name" value="Pyr_redox_2"/>
    <property type="match status" value="1"/>
</dbReference>
<dbReference type="Pfam" id="PF02852">
    <property type="entry name" value="Pyr_redox_dim"/>
    <property type="match status" value="1"/>
</dbReference>
<dbReference type="PIRSF" id="PIRSF000350">
    <property type="entry name" value="Mercury_reductase_MerA"/>
    <property type="match status" value="1"/>
</dbReference>
<dbReference type="PRINTS" id="PR00368">
    <property type="entry name" value="FADPNR"/>
</dbReference>
<dbReference type="PRINTS" id="PR00411">
    <property type="entry name" value="PNDRDTASEI"/>
</dbReference>
<dbReference type="SUPFAM" id="SSF51905">
    <property type="entry name" value="FAD/NAD(P)-binding domain"/>
    <property type="match status" value="1"/>
</dbReference>
<dbReference type="SUPFAM" id="SSF55424">
    <property type="entry name" value="FAD/NAD-linked reductases, dimerisation (C-terminal) domain"/>
    <property type="match status" value="1"/>
</dbReference>
<reference key="1">
    <citation type="journal article" date="2008" name="J. Bacteriol.">
        <title>The pangenome structure of Escherichia coli: comparative genomic analysis of E. coli commensal and pathogenic isolates.</title>
        <authorList>
            <person name="Rasko D.A."/>
            <person name="Rosovitz M.J."/>
            <person name="Myers G.S.A."/>
            <person name="Mongodin E.F."/>
            <person name="Fricke W.F."/>
            <person name="Gajer P."/>
            <person name="Crabtree J."/>
            <person name="Sebaihia M."/>
            <person name="Thomson N.R."/>
            <person name="Chaudhuri R."/>
            <person name="Henderson I.R."/>
            <person name="Sperandio V."/>
            <person name="Ravel J."/>
        </authorList>
    </citation>
    <scope>NUCLEOTIDE SEQUENCE [LARGE SCALE GENOMIC DNA]</scope>
    <source>
        <strain>HS</strain>
    </source>
</reference>
<proteinExistence type="inferred from homology"/>
<protein>
    <recommendedName>
        <fullName evidence="1">Soluble pyridine nucleotide transhydrogenase</fullName>
        <shortName evidence="1">STH</shortName>
        <ecNumber evidence="1">1.6.1.1</ecNumber>
    </recommendedName>
    <alternativeName>
        <fullName evidence="1">NAD(P)(+) transhydrogenase [B-specific]</fullName>
    </alternativeName>
</protein>
<accession>A8A770</accession>
<comment type="function">
    <text evidence="1">Conversion of NADPH, generated by peripheral catabolic pathways, to NADH, which can enter the respiratory chain for energy generation.</text>
</comment>
<comment type="catalytic activity">
    <reaction evidence="1">
        <text>NAD(+) + NADPH = NADH + NADP(+)</text>
        <dbReference type="Rhea" id="RHEA:11692"/>
        <dbReference type="ChEBI" id="CHEBI:57540"/>
        <dbReference type="ChEBI" id="CHEBI:57783"/>
        <dbReference type="ChEBI" id="CHEBI:57945"/>
        <dbReference type="ChEBI" id="CHEBI:58349"/>
        <dbReference type="EC" id="1.6.1.1"/>
    </reaction>
</comment>
<comment type="cofactor">
    <cofactor evidence="1">
        <name>FAD</name>
        <dbReference type="ChEBI" id="CHEBI:57692"/>
    </cofactor>
    <text evidence="1">Binds 1 FAD per subunit.</text>
</comment>
<comment type="subcellular location">
    <subcellularLocation>
        <location evidence="1">Cytoplasm</location>
    </subcellularLocation>
</comment>
<comment type="similarity">
    <text evidence="1">Belongs to the class-I pyridine nucleotide-disulfide oxidoreductase family.</text>
</comment>
<keyword id="KW-0963">Cytoplasm</keyword>
<keyword id="KW-0274">FAD</keyword>
<keyword id="KW-0285">Flavoprotein</keyword>
<keyword id="KW-0520">NAD</keyword>
<keyword id="KW-0521">NADP</keyword>
<keyword id="KW-0560">Oxidoreductase</keyword>
<evidence type="ECO:0000255" key="1">
    <source>
        <dbReference type="HAMAP-Rule" id="MF_00247"/>
    </source>
</evidence>
<sequence>MPHSYDYDAIVIGSGPGGEGAAMGLVKQGARVAVIERYQNVGGGCTHWGTIPSKALRHAVSRIIEFNQNPLYSDHSRLLRSSFADILNHADNVINQQTRMRQGFYERNHCEILQGNARFVDEHTLALDCPDGSVETLTAEKFIIACGSRPYHPTDVDFTHPRIYDSDSILSMHHEPRHVLIYGAGVIGCEYASIFRGMDVKVDLINTRDRLLAFLDQEMSDSLSYHFWNSGVVIRHNEEYEKIEGCDDGVIMHLKSGKKLKADCLLYANGRTGNTDSLALQNIGLETDSRGQLKVNSMYQTAQPHVYAVGDVIGYPSLASAAYDQGRIAAQALVKGEATAHLIEDIPTGIYTIPEISSVGKTEQQLTAMKVPYEVGRAQFKHLARAQIVGMNVGTLKILFHRETKEILGIHCFGERAAEIIHIGQAIMEQKGGGNTIEYFVNTTFNYPTMAEAYRVAALNGLNRLF</sequence>
<gene>
    <name evidence="1" type="primary">sthA</name>
    <name evidence="1" type="synonym">udhA</name>
    <name type="ordered locus">EcHS_A4196</name>
</gene>